<evidence type="ECO:0000255" key="1">
    <source>
        <dbReference type="HAMAP-Rule" id="MF_00267"/>
    </source>
</evidence>
<dbReference type="EMBL" id="CP000075">
    <property type="protein sequence ID" value="AAY36661.1"/>
    <property type="molecule type" value="Genomic_DNA"/>
</dbReference>
<dbReference type="RefSeq" id="WP_003368369.1">
    <property type="nucleotide sequence ID" value="NC_007005.1"/>
</dbReference>
<dbReference type="RefSeq" id="YP_234699.1">
    <property type="nucleotide sequence ID" value="NC_007005.1"/>
</dbReference>
<dbReference type="SMR" id="Q4ZW11"/>
<dbReference type="STRING" id="205918.Psyr_1613"/>
<dbReference type="KEGG" id="psb:Psyr_1613"/>
<dbReference type="PATRIC" id="fig|205918.7.peg.1648"/>
<dbReference type="eggNOG" id="COG0850">
    <property type="taxonomic scope" value="Bacteria"/>
</dbReference>
<dbReference type="HOGENOM" id="CLU_067812_0_1_6"/>
<dbReference type="OrthoDB" id="9794530at2"/>
<dbReference type="Proteomes" id="UP000000426">
    <property type="component" value="Chromosome"/>
</dbReference>
<dbReference type="GO" id="GO:0000902">
    <property type="term" value="P:cell morphogenesis"/>
    <property type="evidence" value="ECO:0007669"/>
    <property type="project" value="InterPro"/>
</dbReference>
<dbReference type="GO" id="GO:0000917">
    <property type="term" value="P:division septum assembly"/>
    <property type="evidence" value="ECO:0007669"/>
    <property type="project" value="UniProtKB-KW"/>
</dbReference>
<dbReference type="GO" id="GO:0051302">
    <property type="term" value="P:regulation of cell division"/>
    <property type="evidence" value="ECO:0007669"/>
    <property type="project" value="InterPro"/>
</dbReference>
<dbReference type="GO" id="GO:1901891">
    <property type="term" value="P:regulation of cell septum assembly"/>
    <property type="evidence" value="ECO:0007669"/>
    <property type="project" value="InterPro"/>
</dbReference>
<dbReference type="Gene3D" id="2.160.20.70">
    <property type="match status" value="1"/>
</dbReference>
<dbReference type="Gene3D" id="3.30.70.260">
    <property type="match status" value="1"/>
</dbReference>
<dbReference type="HAMAP" id="MF_00267">
    <property type="entry name" value="MinC"/>
    <property type="match status" value="1"/>
</dbReference>
<dbReference type="InterPro" id="IPR016098">
    <property type="entry name" value="CAP/MinC_C"/>
</dbReference>
<dbReference type="InterPro" id="IPR013033">
    <property type="entry name" value="MinC"/>
</dbReference>
<dbReference type="InterPro" id="IPR036145">
    <property type="entry name" value="MinC_C_sf"/>
</dbReference>
<dbReference type="InterPro" id="IPR007874">
    <property type="entry name" value="MinC_N"/>
</dbReference>
<dbReference type="InterPro" id="IPR005526">
    <property type="entry name" value="Septum_form_inhib_MinC_C"/>
</dbReference>
<dbReference type="NCBIfam" id="TIGR01222">
    <property type="entry name" value="minC"/>
    <property type="match status" value="1"/>
</dbReference>
<dbReference type="PANTHER" id="PTHR34108">
    <property type="entry name" value="SEPTUM SITE-DETERMINING PROTEIN MINC"/>
    <property type="match status" value="1"/>
</dbReference>
<dbReference type="PANTHER" id="PTHR34108:SF1">
    <property type="entry name" value="SEPTUM SITE-DETERMINING PROTEIN MINC"/>
    <property type="match status" value="1"/>
</dbReference>
<dbReference type="Pfam" id="PF03775">
    <property type="entry name" value="MinC_C"/>
    <property type="match status" value="1"/>
</dbReference>
<dbReference type="Pfam" id="PF05209">
    <property type="entry name" value="MinC_N"/>
    <property type="match status" value="1"/>
</dbReference>
<dbReference type="SUPFAM" id="SSF63848">
    <property type="entry name" value="Cell-division inhibitor MinC, C-terminal domain"/>
    <property type="match status" value="1"/>
</dbReference>
<gene>
    <name evidence="1" type="primary">minC</name>
    <name type="ordered locus">Psyr_1613</name>
</gene>
<protein>
    <recommendedName>
        <fullName evidence="1">Probable septum site-determining protein MinC</fullName>
    </recommendedName>
</protein>
<name>MINC_PSEU2</name>
<sequence>MSQIESQNPEPVFQLKGSMLAITVMELARTNLEALDRQLAAKVAQAPNFFSNTPLILALDKLAPNEGPVDLPGLVRICRQHGLRTLAIRANRIEDIAAAIAVDLPVLPPSGARERVIDPVEAEAPKKIPEKPPEPLIKPTRVITAPVRGGQQIYAQGGDLVVVAPVSPGAELLADGNIHVYGPMRGRALAGIKGDTKARIFCQQLSAELISIAGQYKVSEDLRRDPLWGSPVQISLSGDVLNIIRL</sequence>
<feature type="chain" id="PRO_1000047847" description="Probable septum site-determining protein MinC">
    <location>
        <begin position="1"/>
        <end position="246"/>
    </location>
</feature>
<comment type="function">
    <text evidence="1">Cell division inhibitor that blocks the formation of polar Z ring septums. Rapidly oscillates between the poles of the cell to destabilize FtsZ filaments that have formed before they mature into polar Z rings. Prevents FtsZ polymerization.</text>
</comment>
<comment type="subunit">
    <text evidence="1">Interacts with MinD and FtsZ.</text>
</comment>
<comment type="similarity">
    <text evidence="1">Belongs to the MinC family.</text>
</comment>
<proteinExistence type="inferred from homology"/>
<keyword id="KW-0131">Cell cycle</keyword>
<keyword id="KW-0132">Cell division</keyword>
<keyword id="KW-0717">Septation</keyword>
<organism>
    <name type="scientific">Pseudomonas syringae pv. syringae (strain B728a)</name>
    <dbReference type="NCBI Taxonomy" id="205918"/>
    <lineage>
        <taxon>Bacteria</taxon>
        <taxon>Pseudomonadati</taxon>
        <taxon>Pseudomonadota</taxon>
        <taxon>Gammaproteobacteria</taxon>
        <taxon>Pseudomonadales</taxon>
        <taxon>Pseudomonadaceae</taxon>
        <taxon>Pseudomonas</taxon>
        <taxon>Pseudomonas syringae</taxon>
    </lineage>
</organism>
<reference key="1">
    <citation type="journal article" date="2005" name="Proc. Natl. Acad. Sci. U.S.A.">
        <title>Comparison of the complete genome sequences of Pseudomonas syringae pv. syringae B728a and pv. tomato DC3000.</title>
        <authorList>
            <person name="Feil H."/>
            <person name="Feil W.S."/>
            <person name="Chain P."/>
            <person name="Larimer F."/>
            <person name="Dibartolo G."/>
            <person name="Copeland A."/>
            <person name="Lykidis A."/>
            <person name="Trong S."/>
            <person name="Nolan M."/>
            <person name="Goltsman E."/>
            <person name="Thiel J."/>
            <person name="Malfatti S."/>
            <person name="Loper J.E."/>
            <person name="Lapidus A."/>
            <person name="Detter J.C."/>
            <person name="Land M."/>
            <person name="Richardson P.M."/>
            <person name="Kyrpides N.C."/>
            <person name="Ivanova N."/>
            <person name="Lindow S.E."/>
        </authorList>
    </citation>
    <scope>NUCLEOTIDE SEQUENCE [LARGE SCALE GENOMIC DNA]</scope>
    <source>
        <strain>B728a</strain>
    </source>
</reference>
<accession>Q4ZW11</accession>